<comment type="function">
    <text evidence="1">Initiates the restart of stalled replication forks, which reloads the replicative helicase on sites other than the origin of replication. Recognizes and binds to abandoned replication forks and remodels them to uncover a helicase loading site. Promotes assembly of the primosome at these replication forks.</text>
</comment>
<comment type="catalytic activity">
    <reaction evidence="1">
        <text>Couples ATP hydrolysis with the unwinding of duplex DNA by translocating in the 3'-5' direction.</text>
        <dbReference type="EC" id="5.6.2.4"/>
    </reaction>
</comment>
<comment type="catalytic activity">
    <reaction evidence="1">
        <text>ATP + H2O = ADP + phosphate + H(+)</text>
        <dbReference type="Rhea" id="RHEA:13065"/>
        <dbReference type="ChEBI" id="CHEBI:15377"/>
        <dbReference type="ChEBI" id="CHEBI:15378"/>
        <dbReference type="ChEBI" id="CHEBI:30616"/>
        <dbReference type="ChEBI" id="CHEBI:43474"/>
        <dbReference type="ChEBI" id="CHEBI:456216"/>
        <dbReference type="EC" id="5.6.2.4"/>
    </reaction>
</comment>
<comment type="cofactor">
    <cofactor evidence="1">
        <name>Zn(2+)</name>
        <dbReference type="ChEBI" id="CHEBI:29105"/>
    </cofactor>
    <text evidence="1">Binds 2 zinc ions per subunit.</text>
</comment>
<comment type="subunit">
    <text evidence="1">Component of the replication restart primosome.</text>
</comment>
<comment type="similarity">
    <text evidence="1">Belongs to the helicase family. PriA subfamily.</text>
</comment>
<dbReference type="EC" id="5.6.2.4" evidence="1"/>
<dbReference type="EMBL" id="AE000512">
    <property type="protein sequence ID" value="AAD35271.1"/>
    <property type="molecule type" value="Genomic_DNA"/>
</dbReference>
<dbReference type="PIR" id="H72409">
    <property type="entry name" value="H72409"/>
</dbReference>
<dbReference type="RefSeq" id="NP_227993.1">
    <property type="nucleotide sequence ID" value="NC_000853.1"/>
</dbReference>
<dbReference type="RefSeq" id="WP_004082813.1">
    <property type="nucleotide sequence ID" value="NC_000853.1"/>
</dbReference>
<dbReference type="SMR" id="Q9WY22"/>
<dbReference type="FunCoup" id="Q9WY22">
    <property type="interactions" value="356"/>
</dbReference>
<dbReference type="STRING" id="243274.TM_0178"/>
<dbReference type="PaxDb" id="243274-THEMA_03910"/>
<dbReference type="EnsemblBacteria" id="AAD35271">
    <property type="protein sequence ID" value="AAD35271"/>
    <property type="gene ID" value="TM_0178"/>
</dbReference>
<dbReference type="KEGG" id="tma:TM0178"/>
<dbReference type="KEGG" id="tmi:THEMA_03910"/>
<dbReference type="KEGG" id="tmm:Tmari_0176"/>
<dbReference type="KEGG" id="tmw:THMA_0174"/>
<dbReference type="eggNOG" id="COG1198">
    <property type="taxonomic scope" value="Bacteria"/>
</dbReference>
<dbReference type="InParanoid" id="Q9WY22"/>
<dbReference type="OrthoDB" id="9759544at2"/>
<dbReference type="Proteomes" id="UP000008183">
    <property type="component" value="Chromosome"/>
</dbReference>
<dbReference type="GO" id="GO:1990077">
    <property type="term" value="C:primosome complex"/>
    <property type="evidence" value="ECO:0007669"/>
    <property type="project" value="UniProtKB-UniRule"/>
</dbReference>
<dbReference type="GO" id="GO:0043138">
    <property type="term" value="F:3'-5' DNA helicase activity"/>
    <property type="evidence" value="ECO:0000318"/>
    <property type="project" value="GO_Central"/>
</dbReference>
<dbReference type="GO" id="GO:0005524">
    <property type="term" value="F:ATP binding"/>
    <property type="evidence" value="ECO:0007669"/>
    <property type="project" value="UniProtKB-UniRule"/>
</dbReference>
<dbReference type="GO" id="GO:0016887">
    <property type="term" value="F:ATP hydrolysis activity"/>
    <property type="evidence" value="ECO:0007669"/>
    <property type="project" value="RHEA"/>
</dbReference>
<dbReference type="GO" id="GO:0003677">
    <property type="term" value="F:DNA binding"/>
    <property type="evidence" value="ECO:0007669"/>
    <property type="project" value="UniProtKB-UniRule"/>
</dbReference>
<dbReference type="GO" id="GO:0008270">
    <property type="term" value="F:zinc ion binding"/>
    <property type="evidence" value="ECO:0007669"/>
    <property type="project" value="UniProtKB-UniRule"/>
</dbReference>
<dbReference type="GO" id="GO:0006310">
    <property type="term" value="P:DNA recombination"/>
    <property type="evidence" value="ECO:0000318"/>
    <property type="project" value="GO_Central"/>
</dbReference>
<dbReference type="GO" id="GO:0006260">
    <property type="term" value="P:DNA replication"/>
    <property type="evidence" value="ECO:0000318"/>
    <property type="project" value="GO_Central"/>
</dbReference>
<dbReference type="GO" id="GO:0006270">
    <property type="term" value="P:DNA replication initiation"/>
    <property type="evidence" value="ECO:0000318"/>
    <property type="project" value="GO_Central"/>
</dbReference>
<dbReference type="GO" id="GO:0006269">
    <property type="term" value="P:DNA replication, synthesis of primer"/>
    <property type="evidence" value="ECO:0007669"/>
    <property type="project" value="UniProtKB-KW"/>
</dbReference>
<dbReference type="GO" id="GO:0006302">
    <property type="term" value="P:double-strand break repair"/>
    <property type="evidence" value="ECO:0000318"/>
    <property type="project" value="GO_Central"/>
</dbReference>
<dbReference type="CDD" id="cd17929">
    <property type="entry name" value="DEXHc_priA"/>
    <property type="match status" value="1"/>
</dbReference>
<dbReference type="CDD" id="cd18804">
    <property type="entry name" value="SF2_C_priA"/>
    <property type="match status" value="1"/>
</dbReference>
<dbReference type="Gene3D" id="3.40.50.300">
    <property type="entry name" value="P-loop containing nucleotide triphosphate hydrolases"/>
    <property type="match status" value="2"/>
</dbReference>
<dbReference type="Gene3D" id="3.40.1440.60">
    <property type="entry name" value="PriA, 3(prime) DNA-binding domain"/>
    <property type="match status" value="1"/>
</dbReference>
<dbReference type="HAMAP" id="MF_00983">
    <property type="entry name" value="PriA"/>
    <property type="match status" value="1"/>
</dbReference>
<dbReference type="InterPro" id="IPR011545">
    <property type="entry name" value="DEAD/DEAH_box_helicase_dom"/>
</dbReference>
<dbReference type="InterPro" id="IPR014001">
    <property type="entry name" value="Helicase_ATP-bd"/>
</dbReference>
<dbReference type="InterPro" id="IPR001650">
    <property type="entry name" value="Helicase_C-like"/>
</dbReference>
<dbReference type="InterPro" id="IPR027417">
    <property type="entry name" value="P-loop_NTPase"/>
</dbReference>
<dbReference type="InterPro" id="IPR005259">
    <property type="entry name" value="PriA"/>
</dbReference>
<dbReference type="InterPro" id="IPR041222">
    <property type="entry name" value="PriA_3primeBD"/>
</dbReference>
<dbReference type="InterPro" id="IPR042115">
    <property type="entry name" value="PriA_3primeBD_sf"/>
</dbReference>
<dbReference type="InterPro" id="IPR041236">
    <property type="entry name" value="PriA_C"/>
</dbReference>
<dbReference type="InterPro" id="IPR040498">
    <property type="entry name" value="PriA_CRR"/>
</dbReference>
<dbReference type="InterPro" id="IPR050880">
    <property type="entry name" value="PriA_helicase"/>
</dbReference>
<dbReference type="NCBIfam" id="TIGR00595">
    <property type="entry name" value="priA"/>
    <property type="match status" value="1"/>
</dbReference>
<dbReference type="PANTHER" id="PTHR30580">
    <property type="entry name" value="PRIMOSOMAL PROTEIN N"/>
    <property type="match status" value="1"/>
</dbReference>
<dbReference type="PANTHER" id="PTHR30580:SF0">
    <property type="entry name" value="PRIMOSOMAL PROTEIN N"/>
    <property type="match status" value="1"/>
</dbReference>
<dbReference type="Pfam" id="PF00270">
    <property type="entry name" value="DEAD"/>
    <property type="match status" value="1"/>
</dbReference>
<dbReference type="Pfam" id="PF17764">
    <property type="entry name" value="PriA_3primeBD"/>
    <property type="match status" value="1"/>
</dbReference>
<dbReference type="Pfam" id="PF18074">
    <property type="entry name" value="PriA_C"/>
    <property type="match status" value="1"/>
</dbReference>
<dbReference type="Pfam" id="PF18319">
    <property type="entry name" value="Zn_ribbon_PriA"/>
    <property type="match status" value="1"/>
</dbReference>
<dbReference type="SMART" id="SM00487">
    <property type="entry name" value="DEXDc"/>
    <property type="match status" value="1"/>
</dbReference>
<dbReference type="SMART" id="SM00490">
    <property type="entry name" value="HELICc"/>
    <property type="match status" value="1"/>
</dbReference>
<dbReference type="SUPFAM" id="SSF52540">
    <property type="entry name" value="P-loop containing nucleoside triphosphate hydrolases"/>
    <property type="match status" value="1"/>
</dbReference>
<dbReference type="PROSITE" id="PS51192">
    <property type="entry name" value="HELICASE_ATP_BIND_1"/>
    <property type="match status" value="1"/>
</dbReference>
<dbReference type="PROSITE" id="PS51194">
    <property type="entry name" value="HELICASE_CTER"/>
    <property type="match status" value="1"/>
</dbReference>
<organism>
    <name type="scientific">Thermotoga maritima (strain ATCC 43589 / DSM 3109 / JCM 10099 / NBRC 100826 / MSB8)</name>
    <dbReference type="NCBI Taxonomy" id="243274"/>
    <lineage>
        <taxon>Bacteria</taxon>
        <taxon>Thermotogati</taxon>
        <taxon>Thermotogota</taxon>
        <taxon>Thermotogae</taxon>
        <taxon>Thermotogales</taxon>
        <taxon>Thermotogaceae</taxon>
        <taxon>Thermotoga</taxon>
    </lineage>
</organism>
<proteinExistence type="inferred from homology"/>
<protein>
    <recommendedName>
        <fullName evidence="1">Replication restart protein PriA</fullName>
    </recommendedName>
    <alternativeName>
        <fullName evidence="1">ATP-dependent DNA helicase PriA</fullName>
        <ecNumber evidence="1">5.6.2.4</ecNumber>
    </alternativeName>
    <alternativeName>
        <fullName evidence="1">DNA 3'-5' helicase PriA</fullName>
    </alternativeName>
</protein>
<reference key="1">
    <citation type="journal article" date="1999" name="Nature">
        <title>Evidence for lateral gene transfer between Archaea and Bacteria from genome sequence of Thermotoga maritima.</title>
        <authorList>
            <person name="Nelson K.E."/>
            <person name="Clayton R.A."/>
            <person name="Gill S.R."/>
            <person name="Gwinn M.L."/>
            <person name="Dodson R.J."/>
            <person name="Haft D.H."/>
            <person name="Hickey E.K."/>
            <person name="Peterson J.D."/>
            <person name="Nelson W.C."/>
            <person name="Ketchum K.A."/>
            <person name="McDonald L.A."/>
            <person name="Utterback T.R."/>
            <person name="Malek J.A."/>
            <person name="Linher K.D."/>
            <person name="Garrett M.M."/>
            <person name="Stewart A.M."/>
            <person name="Cotton M.D."/>
            <person name="Pratt M.S."/>
            <person name="Phillips C.A."/>
            <person name="Richardson D.L."/>
            <person name="Heidelberg J.F."/>
            <person name="Sutton G.G."/>
            <person name="Fleischmann R.D."/>
            <person name="Eisen J.A."/>
            <person name="White O."/>
            <person name="Salzberg S.L."/>
            <person name="Smith H.O."/>
            <person name="Venter J.C."/>
            <person name="Fraser C.M."/>
        </authorList>
    </citation>
    <scope>NUCLEOTIDE SEQUENCE [LARGE SCALE GENOMIC DNA]</scope>
    <source>
        <strain>ATCC 43589 / DSM 3109 / JCM 10099 / NBRC 100826 / MSB8</strain>
    </source>
</reference>
<accession>Q9WY22</accession>
<evidence type="ECO:0000255" key="1">
    <source>
        <dbReference type="HAMAP-Rule" id="MF_00983"/>
    </source>
</evidence>
<gene>
    <name evidence="1" type="primary">priA</name>
    <name type="ordered locus">TM_0178</name>
</gene>
<keyword id="KW-0067">ATP-binding</keyword>
<keyword id="KW-0235">DNA replication</keyword>
<keyword id="KW-0238">DNA-binding</keyword>
<keyword id="KW-0347">Helicase</keyword>
<keyword id="KW-0378">Hydrolase</keyword>
<keyword id="KW-0413">Isomerase</keyword>
<keyword id="KW-0479">Metal-binding</keyword>
<keyword id="KW-0547">Nucleotide-binding</keyword>
<keyword id="KW-0639">Primosome</keyword>
<keyword id="KW-1185">Reference proteome</keyword>
<keyword id="KW-0862">Zinc</keyword>
<feature type="chain" id="PRO_0000102135" description="Replication restart protein PriA">
    <location>
        <begin position="1"/>
        <end position="736"/>
    </location>
</feature>
<feature type="domain" description="Helicase ATP-binding" evidence="1">
    <location>
        <begin position="230"/>
        <end position="396"/>
    </location>
</feature>
<feature type="domain" description="Helicase C-terminal" evidence="1">
    <location>
        <begin position="487"/>
        <end position="643"/>
    </location>
</feature>
<feature type="short sequence motif" description="DEAH box" evidence="1">
    <location>
        <begin position="339"/>
        <end position="342"/>
    </location>
</feature>
<feature type="binding site" evidence="1">
    <location>
        <begin position="243"/>
        <end position="250"/>
    </location>
    <ligand>
        <name>ATP</name>
        <dbReference type="ChEBI" id="CHEBI:30616"/>
    </ligand>
</feature>
<feature type="binding site" evidence="1">
    <location>
        <position position="452"/>
    </location>
    <ligand>
        <name>Zn(2+)</name>
        <dbReference type="ChEBI" id="CHEBI:29105"/>
        <label>1</label>
    </ligand>
</feature>
<feature type="binding site" evidence="1">
    <location>
        <position position="455"/>
    </location>
    <ligand>
        <name>Zn(2+)</name>
        <dbReference type="ChEBI" id="CHEBI:29105"/>
        <label>1</label>
    </ligand>
</feature>
<feature type="binding site" evidence="1">
    <location>
        <position position="461"/>
    </location>
    <ligand>
        <name>Zn(2+)</name>
        <dbReference type="ChEBI" id="CHEBI:29105"/>
        <label>2</label>
    </ligand>
</feature>
<feature type="binding site" evidence="1">
    <location>
        <position position="464"/>
    </location>
    <ligand>
        <name>Zn(2+)</name>
        <dbReference type="ChEBI" id="CHEBI:29105"/>
        <label>2</label>
    </ligand>
</feature>
<feature type="binding site" evidence="1">
    <location>
        <position position="479"/>
    </location>
    <ligand>
        <name>Zn(2+)</name>
        <dbReference type="ChEBI" id="CHEBI:29105"/>
        <label>2</label>
    </ligand>
</feature>
<feature type="binding site" evidence="1">
    <location>
        <position position="482"/>
    </location>
    <ligand>
        <name>Zn(2+)</name>
        <dbReference type="ChEBI" id="CHEBI:29105"/>
        <label>2</label>
    </ligand>
</feature>
<feature type="binding site" evidence="1">
    <location>
        <position position="492"/>
    </location>
    <ligand>
        <name>Zn(2+)</name>
        <dbReference type="ChEBI" id="CHEBI:29105"/>
        <label>1</label>
    </ligand>
</feature>
<feature type="binding site" evidence="1">
    <location>
        <position position="495"/>
    </location>
    <ligand>
        <name>Zn(2+)</name>
        <dbReference type="ChEBI" id="CHEBI:29105"/>
        <label>1</label>
    </ligand>
</feature>
<name>PRIA_THEMA</name>
<sequence>MYYKVAVSGSGKVLNVFSSEELLIGERVWLNWRNGKVKGYVLERSLSHENEATPSERDGKSFLSEGHVEIAKWVSERFFSPLGMVFDLFFPQGIDDYKEEVVVSESPFLDFDRMTLRDFLENFGEKALKEMVKKGLVRVEKNFYVKEPRPRVKKRLFLKKRISEIIREHLTVKQRMVVEYLQFNDGVPLEELLEDLEVSKSVIETLQRKNIVEIVSGDVFPKKRRILRGDFKGNISKENLFFGPTGSGKTEALFELIDVYSRKGTVLFLVPEVSVLTHTLSRLKGAFPDLKIGIYHSYLSRARKNLEWYKAASGKIDVLLGTRSAVFVPVKNLSLLIVDEEHDESFYQHTRPSYDAIVVARKISEVFDVPIILSSATPDLWTYREAKEGRIRTFNFTRRFGSLSVEVVDMRNEEKIGSFAKKTLDRIEETLEEGKRVLIYVRRKGFWGRVQCEVCGYVLKCENCDVSLVYHSDTHSLKCHQCGREYGLVESCPRCGGRLVGRTAGTERVERELKRYFPTRRIARVDREVVDNIMELESYIDKLIRGEIDILVGTRLITKSLSVPEIGLVCIMDVDSLIFNPDYSSSLRTFQLVVQALGRASRGDQGKAIIQTYNPEDTIIRKALEEDVNGFYAEELERRKALGYPPYRHLIQVAVKSKNPEVGKNSLTSLKEFLKGEEVLGPVEHWVFKLRGFYRHHLIVKTEDLERVLPKLEKALRILGIDAIVRVDPPTLEVSD</sequence>